<dbReference type="EMBL" id="U40561">
    <property type="protein sequence ID" value="AAB03678.1"/>
    <property type="molecule type" value="Genomic_DNA"/>
</dbReference>
<dbReference type="EMBL" id="X87331">
    <property type="protein sequence ID" value="CAA60767.1"/>
    <property type="molecule type" value="Genomic_DNA"/>
</dbReference>
<dbReference type="EMBL" id="Z74926">
    <property type="protein sequence ID" value="CAA99208.1"/>
    <property type="molecule type" value="Genomic_DNA"/>
</dbReference>
<dbReference type="EMBL" id="BK006948">
    <property type="protein sequence ID" value="DAA10800.1"/>
    <property type="molecule type" value="Genomic_DNA"/>
</dbReference>
<dbReference type="PIR" id="S54624">
    <property type="entry name" value="S54624"/>
</dbReference>
<dbReference type="RefSeq" id="NP_014661.1">
    <property type="nucleotide sequence ID" value="NM_001183437.1"/>
</dbReference>
<dbReference type="BioGRID" id="34422">
    <property type="interactions" value="141"/>
</dbReference>
<dbReference type="DIP" id="DIP-4189N"/>
<dbReference type="FunCoup" id="Q02805">
    <property type="interactions" value="116"/>
</dbReference>
<dbReference type="IntAct" id="Q02805">
    <property type="interactions" value="13"/>
</dbReference>
<dbReference type="MINT" id="Q02805"/>
<dbReference type="STRING" id="4932.YOR018W"/>
<dbReference type="GlyGen" id="Q02805">
    <property type="glycosylation" value="1 site, 1 O-linked glycan (1 site)"/>
</dbReference>
<dbReference type="iPTMnet" id="Q02805"/>
<dbReference type="PaxDb" id="4932-YOR018W"/>
<dbReference type="PeptideAtlas" id="Q02805"/>
<dbReference type="EnsemblFungi" id="YOR018W_mRNA">
    <property type="protein sequence ID" value="YOR018W"/>
    <property type="gene ID" value="YOR018W"/>
</dbReference>
<dbReference type="GeneID" id="854183"/>
<dbReference type="KEGG" id="sce:YOR018W"/>
<dbReference type="AGR" id="SGD:S000005544"/>
<dbReference type="SGD" id="S000005544">
    <property type="gene designation" value="ROD1"/>
</dbReference>
<dbReference type="VEuPathDB" id="FungiDB:YOR018W"/>
<dbReference type="eggNOG" id="KOG3780">
    <property type="taxonomic scope" value="Eukaryota"/>
</dbReference>
<dbReference type="GeneTree" id="ENSGT00940000176571"/>
<dbReference type="HOGENOM" id="CLU_018982_1_1_1"/>
<dbReference type="InParanoid" id="Q02805"/>
<dbReference type="OMA" id="IAVDNTW"/>
<dbReference type="OrthoDB" id="2333384at2759"/>
<dbReference type="BioCyc" id="YEAST:G3O-33566-MONOMER"/>
<dbReference type="Reactome" id="R-SCE-844456">
    <property type="pathway name" value="The NLRP3 inflammasome"/>
</dbReference>
<dbReference type="BioGRID-ORCS" id="854183">
    <property type="hits" value="2 hits in 10 CRISPR screens"/>
</dbReference>
<dbReference type="PRO" id="PR:Q02805"/>
<dbReference type="Proteomes" id="UP000002311">
    <property type="component" value="Chromosome XV"/>
</dbReference>
<dbReference type="RNAct" id="Q02805">
    <property type="molecule type" value="protein"/>
</dbReference>
<dbReference type="GO" id="GO:0005737">
    <property type="term" value="C:cytoplasm"/>
    <property type="evidence" value="ECO:0000318"/>
    <property type="project" value="GO_Central"/>
</dbReference>
<dbReference type="GO" id="GO:0005829">
    <property type="term" value="C:cytosol"/>
    <property type="evidence" value="ECO:0007005"/>
    <property type="project" value="SGD"/>
</dbReference>
<dbReference type="GO" id="GO:0005886">
    <property type="term" value="C:plasma membrane"/>
    <property type="evidence" value="ECO:0000314"/>
    <property type="project" value="SGD"/>
</dbReference>
<dbReference type="GO" id="GO:0030674">
    <property type="term" value="F:protein-macromolecule adaptor activity"/>
    <property type="evidence" value="ECO:0000318"/>
    <property type="project" value="GO_Central"/>
</dbReference>
<dbReference type="GO" id="GO:0031625">
    <property type="term" value="F:ubiquitin protein ligase binding"/>
    <property type="evidence" value="ECO:0000314"/>
    <property type="project" value="SGD"/>
</dbReference>
<dbReference type="GO" id="GO:0071333">
    <property type="term" value="P:cellular response to glucose stimulus"/>
    <property type="evidence" value="ECO:0000314"/>
    <property type="project" value="SGD"/>
</dbReference>
<dbReference type="GO" id="GO:0002092">
    <property type="term" value="P:positive regulation of receptor internalization"/>
    <property type="evidence" value="ECO:0000316"/>
    <property type="project" value="SGD"/>
</dbReference>
<dbReference type="GO" id="GO:0009410">
    <property type="term" value="P:response to xenobiotic stimulus"/>
    <property type="evidence" value="ECO:0000315"/>
    <property type="project" value="SGD"/>
</dbReference>
<dbReference type="GO" id="GO:0070086">
    <property type="term" value="P:ubiquitin-dependent endocytosis"/>
    <property type="evidence" value="ECO:0000315"/>
    <property type="project" value="SGD"/>
</dbReference>
<dbReference type="Gene3D" id="2.60.40.640">
    <property type="match status" value="1"/>
</dbReference>
<dbReference type="InterPro" id="IPR014752">
    <property type="entry name" value="Arrestin-like_C"/>
</dbReference>
<dbReference type="InterPro" id="IPR011021">
    <property type="entry name" value="Arrestin-like_N"/>
</dbReference>
<dbReference type="InterPro" id="IPR011022">
    <property type="entry name" value="Arrestin_C-like"/>
</dbReference>
<dbReference type="InterPro" id="IPR050357">
    <property type="entry name" value="Arrestin_domain-protein"/>
</dbReference>
<dbReference type="PANTHER" id="PTHR11188">
    <property type="entry name" value="ARRESTIN DOMAIN CONTAINING PROTEIN"/>
    <property type="match status" value="1"/>
</dbReference>
<dbReference type="PANTHER" id="PTHR11188:SF17">
    <property type="entry name" value="FI21816P1"/>
    <property type="match status" value="1"/>
</dbReference>
<dbReference type="Pfam" id="PF02752">
    <property type="entry name" value="Arrestin_C"/>
    <property type="match status" value="1"/>
</dbReference>
<dbReference type="Pfam" id="PF00339">
    <property type="entry name" value="Arrestin_N"/>
    <property type="match status" value="1"/>
</dbReference>
<dbReference type="SMART" id="SM01017">
    <property type="entry name" value="Arrestin_C"/>
    <property type="match status" value="1"/>
</dbReference>
<organism>
    <name type="scientific">Saccharomyces cerevisiae (strain ATCC 204508 / S288c)</name>
    <name type="common">Baker's yeast</name>
    <dbReference type="NCBI Taxonomy" id="559292"/>
    <lineage>
        <taxon>Eukaryota</taxon>
        <taxon>Fungi</taxon>
        <taxon>Dikarya</taxon>
        <taxon>Ascomycota</taxon>
        <taxon>Saccharomycotina</taxon>
        <taxon>Saccharomycetes</taxon>
        <taxon>Saccharomycetales</taxon>
        <taxon>Saccharomycetaceae</taxon>
        <taxon>Saccharomyces</taxon>
    </lineage>
</organism>
<comment type="function">
    <text evidence="2 4">Mediates resistance to o-dinitrobenzene, calcium and zinc.</text>
</comment>
<comment type="subunit">
    <text evidence="2">Interacts with RSP5 via its 2 PY-motifs.</text>
</comment>
<comment type="interaction">
    <interactant intactId="EBI-15679">
        <id>Q02805</id>
    </interactant>
    <interactant intactId="EBI-16219">
        <id>P39940</id>
        <label>RSP5</label>
    </interactant>
    <organismsDiffer>false</organismsDiffer>
    <experiments>3</experiments>
</comment>
<comment type="subcellular location">
    <subcellularLocation>
        <location evidence="4">Membrane</location>
        <topology evidence="4">Peripheral membrane protein</topology>
    </subcellularLocation>
    <text>Membrane-associated or associated to a complex that cofractionates with plasma membrane.</text>
</comment>
<comment type="domain">
    <text evidence="2">The PY-motifs are required for the interaction with RSP5 ubiquitin-ligase and important for resistance to o-dinitrobenzene.</text>
</comment>
<comment type="miscellaneous">
    <text evidence="3">Present with 386 molecules/cell in log phase SD medium.</text>
</comment>
<comment type="similarity">
    <text evidence="5">Belongs to the arrestin family.</text>
</comment>
<name>ROD1_YEAST</name>
<protein>
    <recommendedName>
        <fullName>Protein ROD1</fullName>
    </recommendedName>
    <alternativeName>
        <fullName>Resistance to o-dinitrobenzene protein 1</fullName>
    </alternativeName>
</protein>
<evidence type="ECO:0000256" key="1">
    <source>
        <dbReference type="SAM" id="MobiDB-lite"/>
    </source>
</evidence>
<evidence type="ECO:0000269" key="2">
    <source>
    </source>
</evidence>
<evidence type="ECO:0000269" key="3">
    <source>
    </source>
</evidence>
<evidence type="ECO:0000269" key="4">
    <source>
    </source>
</evidence>
<evidence type="ECO:0000305" key="5"/>
<evidence type="ECO:0007744" key="6">
    <source>
    </source>
</evidence>
<evidence type="ECO:0007744" key="7">
    <source>
    </source>
</evidence>
<evidence type="ECO:0007744" key="8">
    <source>
    </source>
</evidence>
<evidence type="ECO:0007744" key="9">
    <source>
    </source>
</evidence>
<sequence length="837" mass="92349">MFSSSSRPSKEPLLFDIRLRNLDNDVLLIKGPPDEASSVLLSGTIVLSITEPIQIKSLALRLFGRLRLNIPTVLQTVHGPHKRYSKFERNIYSHFWDDFNIKSYFQNLYDNHNNGKITISSKSSTNLAALPKRKRALSTASLISSNGQTSASKNYHTLVKGNYEFPFSAIIPGSLVESVEGLPNAAVTYALEATIERPKQPDLICKKHLRVIRTLAIDAVELSETVSVDNSWPEKVDYTISIPTKAIAIGSSTMINILIVPILKGLKLGPVRISLVENSQYCGSYGGVINQERMVAKLKLKDPLKHVAQIKKKRSLNEAADEGVDTDTGEFQDKWEVRALLNIPASLTKCSQDCRILSNIKVRHKIKFTISLLNPDGHISELRAALPVQLFISPFVPVNVKTSDVIERTLKTFGPSYQVTSQHDNSFSSKNFVDDSEEDVIFQRSASALQLSSMPTIVSGSTLNINSTDAEATAVADTTMVTSLMVPPNYGNHVYDRVYGEVTNEDETSASASSSAVESQAIHNIQNLYISDSNNSNNPILAPNPQIKIEDDSLNNCDSRGDSVNNSNLNLVNSNLTISENWNNNSPSANRYNNIINAGLNSPSLTPSFAHLSRRNSYSRQTSSTSLKNDLELTDLSRVPSYDKAMKSDMIGEDLPPAYPEEELGVQENKKIELERPQILHHKSTSSLLPLPGSSKSSNNLKRSSSRTHLSHSPLPRNNSGSSVSLQQLARNNTDSSFNLNLSFTSAKSSTGSRHFPFNMTTSFTSNSSSKNNSHFDKTDSTSDANKPREEENYTSATHNRRSRSSSVRSNNSNSPLRQGTGSFANLMEMFTKRDRS</sequence>
<gene>
    <name type="primary">ROD1</name>
    <name type="ordered locus">YOR018W</name>
    <name type="ORF">OR26.08</name>
</gene>
<feature type="chain" id="PRO_0000097396" description="Protein ROD1">
    <location>
        <begin position="1"/>
        <end position="837"/>
    </location>
</feature>
<feature type="region of interest" description="Disordered" evidence="1">
    <location>
        <begin position="675"/>
        <end position="726"/>
    </location>
</feature>
<feature type="region of interest" description="Disordered" evidence="1">
    <location>
        <begin position="763"/>
        <end position="837"/>
    </location>
</feature>
<feature type="short sequence motif" description="PY-motif">
    <location>
        <begin position="487"/>
        <end position="490"/>
    </location>
</feature>
<feature type="short sequence motif" description="PY-motif">
    <location>
        <begin position="656"/>
        <end position="659"/>
    </location>
</feature>
<feature type="compositionally biased region" description="Low complexity" evidence="1">
    <location>
        <begin position="685"/>
        <end position="703"/>
    </location>
</feature>
<feature type="compositionally biased region" description="Polar residues" evidence="1">
    <location>
        <begin position="716"/>
        <end position="726"/>
    </location>
</feature>
<feature type="compositionally biased region" description="Low complexity" evidence="1">
    <location>
        <begin position="763"/>
        <end position="773"/>
    </location>
</feature>
<feature type="compositionally biased region" description="Basic and acidic residues" evidence="1">
    <location>
        <begin position="774"/>
        <end position="792"/>
    </location>
</feature>
<feature type="compositionally biased region" description="Low complexity" evidence="1">
    <location>
        <begin position="805"/>
        <end position="815"/>
    </location>
</feature>
<feature type="modified residue" description="Phosphoserine" evidence="8">
    <location>
        <position position="138"/>
    </location>
</feature>
<feature type="modified residue" description="Phosphoserine" evidence="6 8">
    <location>
        <position position="141"/>
    </location>
</feature>
<feature type="modified residue" description="Phosphoserine" evidence="6 7 8">
    <location>
        <position position="436"/>
    </location>
</feature>
<feature type="modified residue" description="Phosphoserine" evidence="7">
    <location>
        <position position="536"/>
    </location>
</feature>
<feature type="modified residue" description="Phosphoserine" evidence="6 7 8">
    <location>
        <position position="720"/>
    </location>
</feature>
<feature type="modified residue" description="Phosphoserine" evidence="8">
    <location>
        <position position="725"/>
    </location>
</feature>
<feature type="cross-link" description="Glycyl lysine isopeptide (Lys-Gly) (interchain with G-Cter in ubiquitin)" evidence="9">
    <location>
        <position position="401"/>
    </location>
</feature>
<feature type="mutagenesis site" description="Reduced binding to RSP5." evidence="2">
    <original>PP</original>
    <variation>QA</variation>
    <location>
        <begin position="487"/>
        <end position="488"/>
    </location>
</feature>
<feature type="mutagenesis site" description="Reduced binding to RSP5." evidence="2">
    <original>PP</original>
    <variation>QA</variation>
    <location>
        <begin position="656"/>
        <end position="657"/>
    </location>
</feature>
<feature type="sequence conflict" description="In Ref. 1; AAB03678." evidence="5" ref="1">
    <original>Y</original>
    <variation>D</variation>
    <location>
        <position position="618"/>
    </location>
</feature>
<reference key="1">
    <citation type="journal article" date="1996" name="J. Biol. Chem.">
        <title>ROD1, a novel gene conferring multiple resistance phenotypes in Saccharomyces cerevisiae.</title>
        <authorList>
            <person name="Wu A.L."/>
            <person name="Hallstrom T.C."/>
            <person name="Moye-Rowley W.S."/>
        </authorList>
    </citation>
    <scope>NUCLEOTIDE SEQUENCE [GENOMIC DNA]</scope>
    <scope>FUNCTION</scope>
    <scope>SUBCELLULAR LOCATION</scope>
</reference>
<reference key="2">
    <citation type="journal article" date="1997" name="Nature">
        <title>The nucleotide sequence of Saccharomyces cerevisiae chromosome XV.</title>
        <authorList>
            <person name="Dujon B."/>
            <person name="Albermann K."/>
            <person name="Aldea M."/>
            <person name="Alexandraki D."/>
            <person name="Ansorge W."/>
            <person name="Arino J."/>
            <person name="Benes V."/>
            <person name="Bohn C."/>
            <person name="Bolotin-Fukuhara M."/>
            <person name="Bordonne R."/>
            <person name="Boyer J."/>
            <person name="Camasses A."/>
            <person name="Casamayor A."/>
            <person name="Casas C."/>
            <person name="Cheret G."/>
            <person name="Cziepluch C."/>
            <person name="Daignan-Fornier B."/>
            <person name="Dang V.-D."/>
            <person name="de Haan M."/>
            <person name="Delius H."/>
            <person name="Durand P."/>
            <person name="Fairhead C."/>
            <person name="Feldmann H."/>
            <person name="Gaillon L."/>
            <person name="Galisson F."/>
            <person name="Gamo F.-J."/>
            <person name="Gancedo C."/>
            <person name="Goffeau A."/>
            <person name="Goulding S.E."/>
            <person name="Grivell L.A."/>
            <person name="Habbig B."/>
            <person name="Hand N.J."/>
            <person name="Hani J."/>
            <person name="Hattenhorst U."/>
            <person name="Hebling U."/>
            <person name="Hernando Y."/>
            <person name="Herrero E."/>
            <person name="Heumann K."/>
            <person name="Hiesel R."/>
            <person name="Hilger F."/>
            <person name="Hofmann B."/>
            <person name="Hollenberg C.P."/>
            <person name="Hughes B."/>
            <person name="Jauniaux J.-C."/>
            <person name="Kalogeropoulos A."/>
            <person name="Katsoulou C."/>
            <person name="Kordes E."/>
            <person name="Lafuente M.J."/>
            <person name="Landt O."/>
            <person name="Louis E.J."/>
            <person name="Maarse A.C."/>
            <person name="Madania A."/>
            <person name="Mannhaupt G."/>
            <person name="Marck C."/>
            <person name="Martin R.P."/>
            <person name="Mewes H.-W."/>
            <person name="Michaux G."/>
            <person name="Paces V."/>
            <person name="Parle-McDermott A.G."/>
            <person name="Pearson B.M."/>
            <person name="Perrin A."/>
            <person name="Pettersson B."/>
            <person name="Poch O."/>
            <person name="Pohl T.M."/>
            <person name="Poirey R."/>
            <person name="Portetelle D."/>
            <person name="Pujol A."/>
            <person name="Purnelle B."/>
            <person name="Ramezani Rad M."/>
            <person name="Rechmann S."/>
            <person name="Schwager C."/>
            <person name="Schweizer M."/>
            <person name="Sor F."/>
            <person name="Sterky F."/>
            <person name="Tarassov I.A."/>
            <person name="Teodoru C."/>
            <person name="Tettelin H."/>
            <person name="Thierry A."/>
            <person name="Tobiasch E."/>
            <person name="Tzermia M."/>
            <person name="Uhlen M."/>
            <person name="Unseld M."/>
            <person name="Valens M."/>
            <person name="Vandenbol M."/>
            <person name="Vetter I."/>
            <person name="Vlcek C."/>
            <person name="Voet M."/>
            <person name="Volckaert G."/>
            <person name="Voss H."/>
            <person name="Wambutt R."/>
            <person name="Wedler H."/>
            <person name="Wiemann S."/>
            <person name="Winsor B."/>
            <person name="Wolfe K.H."/>
            <person name="Zollner A."/>
            <person name="Zumstein E."/>
            <person name="Kleine K."/>
        </authorList>
    </citation>
    <scope>NUCLEOTIDE SEQUENCE [LARGE SCALE GENOMIC DNA]</scope>
    <source>
        <strain>ATCC 204508 / S288c</strain>
    </source>
</reference>
<reference key="3">
    <citation type="journal article" date="2014" name="G3 (Bethesda)">
        <title>The reference genome sequence of Saccharomyces cerevisiae: Then and now.</title>
        <authorList>
            <person name="Engel S.R."/>
            <person name="Dietrich F.S."/>
            <person name="Fisk D.G."/>
            <person name="Binkley G."/>
            <person name="Balakrishnan R."/>
            <person name="Costanzo M.C."/>
            <person name="Dwight S.S."/>
            <person name="Hitz B.C."/>
            <person name="Karra K."/>
            <person name="Nash R.S."/>
            <person name="Weng S."/>
            <person name="Wong E.D."/>
            <person name="Lloyd P."/>
            <person name="Skrzypek M.S."/>
            <person name="Miyasato S.R."/>
            <person name="Simison M."/>
            <person name="Cherry J.M."/>
        </authorList>
    </citation>
    <scope>GENOME REANNOTATION</scope>
    <source>
        <strain>ATCC 204508 / S288c</strain>
    </source>
</reference>
<reference key="4">
    <citation type="journal article" date="2002" name="FEBS Lett.">
        <title>PY motifs of Rod1 are required for binding to Rsp5 and for drug resistance.</title>
        <authorList>
            <person name="Andoh T."/>
            <person name="Hirata Y."/>
            <person name="Kikuchi A."/>
        </authorList>
    </citation>
    <scope>FUNCTION</scope>
    <scope>DOMAIN</scope>
    <scope>INTERACTION WITH RSP5</scope>
    <scope>MUTAGENESIS OF 487-PRO-PRO-488 AND 656-PRO-PRO-657</scope>
</reference>
<reference key="5">
    <citation type="journal article" date="2003" name="Nature">
        <title>Global analysis of protein expression in yeast.</title>
        <authorList>
            <person name="Ghaemmaghami S."/>
            <person name="Huh W.-K."/>
            <person name="Bower K."/>
            <person name="Howson R.W."/>
            <person name="Belle A."/>
            <person name="Dephoure N."/>
            <person name="O'Shea E.K."/>
            <person name="Weissman J.S."/>
        </authorList>
    </citation>
    <scope>LEVEL OF PROTEIN EXPRESSION [LARGE SCALE ANALYSIS]</scope>
</reference>
<reference key="6">
    <citation type="journal article" date="2007" name="J. Proteome Res.">
        <title>Large-scale phosphorylation analysis of alpha-factor-arrested Saccharomyces cerevisiae.</title>
        <authorList>
            <person name="Li X."/>
            <person name="Gerber S.A."/>
            <person name="Rudner A.D."/>
            <person name="Beausoleil S.A."/>
            <person name="Haas W."/>
            <person name="Villen J."/>
            <person name="Elias J.E."/>
            <person name="Gygi S.P."/>
        </authorList>
    </citation>
    <scope>PHOSPHORYLATION [LARGE SCALE ANALYSIS] AT SER-141; SER-436 AND SER-720</scope>
    <scope>IDENTIFICATION BY MASS SPECTROMETRY [LARGE SCALE ANALYSIS]</scope>
    <source>
        <strain>ADR376</strain>
    </source>
</reference>
<reference key="7">
    <citation type="journal article" date="2008" name="Mol. Cell. Proteomics">
        <title>A multidimensional chromatography technology for in-depth phosphoproteome analysis.</title>
        <authorList>
            <person name="Albuquerque C.P."/>
            <person name="Smolka M.B."/>
            <person name="Payne S.H."/>
            <person name="Bafna V."/>
            <person name="Eng J."/>
            <person name="Zhou H."/>
        </authorList>
    </citation>
    <scope>PHOSPHORYLATION [LARGE SCALE ANALYSIS] AT SER-436; SER-536 AND SER-720</scope>
    <scope>IDENTIFICATION BY MASS SPECTROMETRY [LARGE SCALE ANALYSIS]</scope>
</reference>
<reference key="8">
    <citation type="journal article" date="2009" name="Science">
        <title>Global analysis of Cdk1 substrate phosphorylation sites provides insights into evolution.</title>
        <authorList>
            <person name="Holt L.J."/>
            <person name="Tuch B.B."/>
            <person name="Villen J."/>
            <person name="Johnson A.D."/>
            <person name="Gygi S.P."/>
            <person name="Morgan D.O."/>
        </authorList>
    </citation>
    <scope>PHOSPHORYLATION [LARGE SCALE ANALYSIS] AT SER-138; SER-141; SER-436; SER-720 AND SER-725</scope>
    <scope>IDENTIFICATION BY MASS SPECTROMETRY [LARGE SCALE ANALYSIS]</scope>
</reference>
<reference key="9">
    <citation type="journal article" date="2012" name="Proteomics">
        <title>Sites of ubiquitin attachment in Saccharomyces cerevisiae.</title>
        <authorList>
            <person name="Starita L.M."/>
            <person name="Lo R.S."/>
            <person name="Eng J.K."/>
            <person name="von Haller P.D."/>
            <person name="Fields S."/>
        </authorList>
    </citation>
    <scope>UBIQUITINATION [LARGE SCALE ANALYSIS] AT LYS-401</scope>
    <scope>IDENTIFICATION BY MASS SPECTROMETRY [LARGE SCALE ANALYSIS]</scope>
</reference>
<proteinExistence type="evidence at protein level"/>
<keyword id="KW-1017">Isopeptide bond</keyword>
<keyword id="KW-0472">Membrane</keyword>
<keyword id="KW-0597">Phosphoprotein</keyword>
<keyword id="KW-1185">Reference proteome</keyword>
<keyword id="KW-0832">Ubl conjugation</keyword>
<accession>Q02805</accession>
<accession>D6W284</accession>
<accession>Q12475</accession>